<gene>
    <name evidence="1" type="primary">prfA</name>
    <name type="ordered locus">BSUIS_A1710</name>
</gene>
<dbReference type="EMBL" id="CP000911">
    <property type="protein sequence ID" value="ABY38729.1"/>
    <property type="molecule type" value="Genomic_DNA"/>
</dbReference>
<dbReference type="RefSeq" id="WP_006071606.1">
    <property type="nucleotide sequence ID" value="NC_010169.1"/>
</dbReference>
<dbReference type="SMR" id="B0CIC3"/>
<dbReference type="KEGG" id="bmt:BSUIS_A1710"/>
<dbReference type="HOGENOM" id="CLU_036856_0_1_5"/>
<dbReference type="Proteomes" id="UP000008545">
    <property type="component" value="Chromosome I"/>
</dbReference>
<dbReference type="GO" id="GO:0005737">
    <property type="term" value="C:cytoplasm"/>
    <property type="evidence" value="ECO:0007669"/>
    <property type="project" value="UniProtKB-SubCell"/>
</dbReference>
<dbReference type="GO" id="GO:0016149">
    <property type="term" value="F:translation release factor activity, codon specific"/>
    <property type="evidence" value="ECO:0007669"/>
    <property type="project" value="UniProtKB-UniRule"/>
</dbReference>
<dbReference type="FunFam" id="3.30.160.20:FF:000004">
    <property type="entry name" value="Peptide chain release factor 1"/>
    <property type="match status" value="1"/>
</dbReference>
<dbReference type="FunFam" id="3.30.70.1660:FF:000002">
    <property type="entry name" value="Peptide chain release factor 1"/>
    <property type="match status" value="1"/>
</dbReference>
<dbReference type="FunFam" id="3.30.70.1660:FF:000004">
    <property type="entry name" value="Peptide chain release factor 1"/>
    <property type="match status" value="1"/>
</dbReference>
<dbReference type="Gene3D" id="3.30.160.20">
    <property type="match status" value="1"/>
</dbReference>
<dbReference type="Gene3D" id="3.30.70.1660">
    <property type="match status" value="2"/>
</dbReference>
<dbReference type="Gene3D" id="6.10.140.1950">
    <property type="match status" value="1"/>
</dbReference>
<dbReference type="HAMAP" id="MF_00093">
    <property type="entry name" value="Rel_fac_1"/>
    <property type="match status" value="1"/>
</dbReference>
<dbReference type="InterPro" id="IPR005139">
    <property type="entry name" value="PCRF"/>
</dbReference>
<dbReference type="InterPro" id="IPR000352">
    <property type="entry name" value="Pep_chain_release_fac_I"/>
</dbReference>
<dbReference type="InterPro" id="IPR045853">
    <property type="entry name" value="Pep_chain_release_fac_I_sf"/>
</dbReference>
<dbReference type="InterPro" id="IPR050057">
    <property type="entry name" value="Prokaryotic/Mito_RF"/>
</dbReference>
<dbReference type="InterPro" id="IPR004373">
    <property type="entry name" value="RF-1"/>
</dbReference>
<dbReference type="NCBIfam" id="TIGR00019">
    <property type="entry name" value="prfA"/>
    <property type="match status" value="1"/>
</dbReference>
<dbReference type="NCBIfam" id="NF001859">
    <property type="entry name" value="PRK00591.1"/>
    <property type="match status" value="1"/>
</dbReference>
<dbReference type="PANTHER" id="PTHR43804">
    <property type="entry name" value="LD18447P"/>
    <property type="match status" value="1"/>
</dbReference>
<dbReference type="PANTHER" id="PTHR43804:SF7">
    <property type="entry name" value="LD18447P"/>
    <property type="match status" value="1"/>
</dbReference>
<dbReference type="Pfam" id="PF03462">
    <property type="entry name" value="PCRF"/>
    <property type="match status" value="1"/>
</dbReference>
<dbReference type="Pfam" id="PF00472">
    <property type="entry name" value="RF-1"/>
    <property type="match status" value="1"/>
</dbReference>
<dbReference type="SMART" id="SM00937">
    <property type="entry name" value="PCRF"/>
    <property type="match status" value="1"/>
</dbReference>
<dbReference type="SUPFAM" id="SSF75620">
    <property type="entry name" value="Release factor"/>
    <property type="match status" value="1"/>
</dbReference>
<dbReference type="PROSITE" id="PS00745">
    <property type="entry name" value="RF_PROK_I"/>
    <property type="match status" value="1"/>
</dbReference>
<protein>
    <recommendedName>
        <fullName evidence="1">Peptide chain release factor 1</fullName>
        <shortName evidence="1">RF-1</shortName>
    </recommendedName>
</protein>
<feature type="chain" id="PRO_1000075485" description="Peptide chain release factor 1">
    <location>
        <begin position="1"/>
        <end position="359"/>
    </location>
</feature>
<feature type="region of interest" description="Disordered" evidence="2">
    <location>
        <begin position="283"/>
        <end position="309"/>
    </location>
</feature>
<feature type="modified residue" description="N5-methylglutamine" evidence="1">
    <location>
        <position position="235"/>
    </location>
</feature>
<reference key="1">
    <citation type="submission" date="2007-12" db="EMBL/GenBank/DDBJ databases">
        <title>Brucella suis ATCC 23445 whole genome shotgun sequencing project.</title>
        <authorList>
            <person name="Setubal J.C."/>
            <person name="Bowns C."/>
            <person name="Boyle S."/>
            <person name="Crasta O.R."/>
            <person name="Czar M.J."/>
            <person name="Dharmanolla C."/>
            <person name="Gillespie J.J."/>
            <person name="Kenyon R.W."/>
            <person name="Lu J."/>
            <person name="Mane S."/>
            <person name="Mohapatra S."/>
            <person name="Nagrani S."/>
            <person name="Purkayastha A."/>
            <person name="Rajasimha H.K."/>
            <person name="Shallom J.M."/>
            <person name="Shallom S."/>
            <person name="Shukla M."/>
            <person name="Snyder E.E."/>
            <person name="Sobral B.W."/>
            <person name="Wattam A.R."/>
            <person name="Will R."/>
            <person name="Williams K."/>
            <person name="Yoo H."/>
            <person name="Bruce D."/>
            <person name="Detter C."/>
            <person name="Munk C."/>
            <person name="Brettin T.S."/>
        </authorList>
    </citation>
    <scope>NUCLEOTIDE SEQUENCE [LARGE SCALE GENOMIC DNA]</scope>
    <source>
        <strain>ATCC 23445 / NCTC 10510</strain>
    </source>
</reference>
<sequence>MIALPQDRMDQLLKRFSMIESQMANNPDSDTYVKLASEYSELQDVVGKIRELSDARMEASDLAAMRDDASTDAEMRALAVEELPEVEKRIAVLEQDVQILLLPKDAADDKNAILEIRAGTGGLEAALFAGDLFRMYERYAAEKGWRVELVSASEGDAGGYKEIITTVSGKGVFSKLKFESGVHRVQRVPETEAGGRIHTSAATVAVLPEAEDIDIEIRNEDIRIDTMRASGAGGQHVNTTDSAVRITHIPTGIMVVQAEKSQHQNRARAMQILRARLYDMERQKAESERSQARRSQVGSGDRSERIRTYNFPQGRVTDHRINLTLYKLDRVMEGDLDELVDALISDHQTALLAELGEQP</sequence>
<evidence type="ECO:0000255" key="1">
    <source>
        <dbReference type="HAMAP-Rule" id="MF_00093"/>
    </source>
</evidence>
<evidence type="ECO:0000256" key="2">
    <source>
        <dbReference type="SAM" id="MobiDB-lite"/>
    </source>
</evidence>
<accession>B0CIC3</accession>
<name>RF1_BRUSI</name>
<proteinExistence type="inferred from homology"/>
<keyword id="KW-0963">Cytoplasm</keyword>
<keyword id="KW-0488">Methylation</keyword>
<keyword id="KW-0648">Protein biosynthesis</keyword>
<comment type="function">
    <text evidence="1">Peptide chain release factor 1 directs the termination of translation in response to the peptide chain termination codons UAG and UAA.</text>
</comment>
<comment type="subcellular location">
    <subcellularLocation>
        <location evidence="1">Cytoplasm</location>
    </subcellularLocation>
</comment>
<comment type="PTM">
    <text evidence="1">Methylated by PrmC. Methylation increases the termination efficiency of RF1.</text>
</comment>
<comment type="similarity">
    <text evidence="1">Belongs to the prokaryotic/mitochondrial release factor family.</text>
</comment>
<organism>
    <name type="scientific">Brucella suis (strain ATCC 23445 / NCTC 10510)</name>
    <dbReference type="NCBI Taxonomy" id="470137"/>
    <lineage>
        <taxon>Bacteria</taxon>
        <taxon>Pseudomonadati</taxon>
        <taxon>Pseudomonadota</taxon>
        <taxon>Alphaproteobacteria</taxon>
        <taxon>Hyphomicrobiales</taxon>
        <taxon>Brucellaceae</taxon>
        <taxon>Brucella/Ochrobactrum group</taxon>
        <taxon>Brucella</taxon>
    </lineage>
</organism>